<gene>
    <name type="ordered locus">At4g22217</name>
    <name type="ORF">T10I14.9</name>
</gene>
<dbReference type="EMBL" id="AL021712">
    <property type="protein sequence ID" value="CAA16771.1"/>
    <property type="status" value="ALT_SEQ"/>
    <property type="molecule type" value="Genomic_DNA"/>
</dbReference>
<dbReference type="EMBL" id="AL161556">
    <property type="protein sequence ID" value="CAB79176.1"/>
    <property type="status" value="ALT_SEQ"/>
    <property type="molecule type" value="Genomic_DNA"/>
</dbReference>
<dbReference type="EMBL" id="CP002687">
    <property type="protein sequence ID" value="AEE84575.1"/>
    <property type="molecule type" value="Genomic_DNA"/>
</dbReference>
<dbReference type="EMBL" id="DQ446860">
    <property type="protein sequence ID" value="ABE66084.1"/>
    <property type="molecule type" value="mRNA"/>
</dbReference>
<dbReference type="EMBL" id="DQ912234">
    <property type="protein sequence ID" value="ABK27945.1"/>
    <property type="status" value="ALT_SEQ"/>
    <property type="molecule type" value="mRNA"/>
</dbReference>
<dbReference type="EMBL" id="EF182820">
    <property type="status" value="NOT_ANNOTATED_CDS"/>
    <property type="molecule type" value="mRNA"/>
</dbReference>
<dbReference type="PIR" id="T04902">
    <property type="entry name" value="T04902"/>
</dbReference>
<dbReference type="RefSeq" id="NP_567655.1">
    <property type="nucleotide sequence ID" value="NM_118346.3"/>
</dbReference>
<dbReference type="PaxDb" id="3702-AT4G22217.1"/>
<dbReference type="EnsemblPlants" id="AT4G22217.1">
    <property type="protein sequence ID" value="AT4G22217.1"/>
    <property type="gene ID" value="AT4G22217"/>
</dbReference>
<dbReference type="GeneID" id="828315"/>
<dbReference type="Gramene" id="AT4G22217.1">
    <property type="protein sequence ID" value="AT4G22217.1"/>
    <property type="gene ID" value="AT4G22217"/>
</dbReference>
<dbReference type="KEGG" id="ath:AT4G22217"/>
<dbReference type="Araport" id="AT4G22217"/>
<dbReference type="TAIR" id="AT4G22217"/>
<dbReference type="HOGENOM" id="CLU_2486423_0_0_1"/>
<dbReference type="InParanoid" id="Q3E6U0"/>
<dbReference type="OMA" id="CKESCIK"/>
<dbReference type="OrthoDB" id="1022584at2759"/>
<dbReference type="PhylomeDB" id="Q3E6U0"/>
<dbReference type="PRO" id="PR:Q3E6U0"/>
<dbReference type="Proteomes" id="UP000006548">
    <property type="component" value="Chromosome 4"/>
</dbReference>
<dbReference type="ExpressionAtlas" id="Q3E6U0">
    <property type="expression patterns" value="baseline and differential"/>
</dbReference>
<dbReference type="GO" id="GO:0005576">
    <property type="term" value="C:extracellular region"/>
    <property type="evidence" value="ECO:0007669"/>
    <property type="project" value="UniProtKB-SubCell"/>
</dbReference>
<dbReference type="GO" id="GO:0050832">
    <property type="term" value="P:defense response to fungus"/>
    <property type="evidence" value="ECO:0007669"/>
    <property type="project" value="UniProtKB-KW"/>
</dbReference>
<dbReference type="GO" id="GO:0031640">
    <property type="term" value="P:killing of cells of another organism"/>
    <property type="evidence" value="ECO:0007669"/>
    <property type="project" value="UniProtKB-KW"/>
</dbReference>
<comment type="subcellular location">
    <subcellularLocation>
        <location evidence="1">Secreted</location>
    </subcellularLocation>
</comment>
<comment type="similarity">
    <text evidence="3">Belongs to the DEFL family.</text>
</comment>
<comment type="sequence caution" evidence="3">
    <conflict type="erroneous termination">
        <sequence resource="EMBL-CDS" id="ABK27945"/>
    </conflict>
    <text>Extended C-terminus.</text>
</comment>
<comment type="sequence caution" evidence="3">
    <conflict type="erroneous gene model prediction">
        <sequence resource="EMBL-CDS" id="CAA16771"/>
    </conflict>
    <text>The predicted gene has been split into 4 genes: At4g22210, At4g22212, At4g22214 and At4g22217.</text>
</comment>
<comment type="sequence caution" evidence="3">
    <conflict type="erroneous gene model prediction">
        <sequence resource="EMBL-CDS" id="CAB79176"/>
    </conflict>
    <text>The predicted gene has been split into 4 genes: At4g22210, At4g22212, At4g22214 and At4g22217.</text>
</comment>
<evidence type="ECO:0000250" key="1"/>
<evidence type="ECO:0000255" key="2"/>
<evidence type="ECO:0000305" key="3"/>
<accession>Q3E6U0</accession>
<accession>A0MJT5</accession>
<accession>O49626</accession>
<protein>
    <recommendedName>
        <fullName>Defensin-like protein 100</fullName>
    </recommendedName>
</protein>
<reference key="1">
    <citation type="journal article" date="1999" name="Nature">
        <title>Sequence and analysis of chromosome 4 of the plant Arabidopsis thaliana.</title>
        <authorList>
            <person name="Mayer K.F.X."/>
            <person name="Schueller C."/>
            <person name="Wambutt R."/>
            <person name="Murphy G."/>
            <person name="Volckaert G."/>
            <person name="Pohl T."/>
            <person name="Duesterhoeft A."/>
            <person name="Stiekema W."/>
            <person name="Entian K.-D."/>
            <person name="Terryn N."/>
            <person name="Harris B."/>
            <person name="Ansorge W."/>
            <person name="Brandt P."/>
            <person name="Grivell L.A."/>
            <person name="Rieger M."/>
            <person name="Weichselgartner M."/>
            <person name="de Simone V."/>
            <person name="Obermaier B."/>
            <person name="Mache R."/>
            <person name="Mueller M."/>
            <person name="Kreis M."/>
            <person name="Delseny M."/>
            <person name="Puigdomenech P."/>
            <person name="Watson M."/>
            <person name="Schmidtheini T."/>
            <person name="Reichert B."/>
            <person name="Portetelle D."/>
            <person name="Perez-Alonso M."/>
            <person name="Boutry M."/>
            <person name="Bancroft I."/>
            <person name="Vos P."/>
            <person name="Hoheisel J."/>
            <person name="Zimmermann W."/>
            <person name="Wedler H."/>
            <person name="Ridley P."/>
            <person name="Langham S.-A."/>
            <person name="McCullagh B."/>
            <person name="Bilham L."/>
            <person name="Robben J."/>
            <person name="van der Schueren J."/>
            <person name="Grymonprez B."/>
            <person name="Chuang Y.-J."/>
            <person name="Vandenbussche F."/>
            <person name="Braeken M."/>
            <person name="Weltjens I."/>
            <person name="Voet M."/>
            <person name="Bastiaens I."/>
            <person name="Aert R."/>
            <person name="Defoor E."/>
            <person name="Weitzenegger T."/>
            <person name="Bothe G."/>
            <person name="Ramsperger U."/>
            <person name="Hilbert H."/>
            <person name="Braun M."/>
            <person name="Holzer E."/>
            <person name="Brandt A."/>
            <person name="Peters S."/>
            <person name="van Staveren M."/>
            <person name="Dirkse W."/>
            <person name="Mooijman P."/>
            <person name="Klein Lankhorst R."/>
            <person name="Rose M."/>
            <person name="Hauf J."/>
            <person name="Koetter P."/>
            <person name="Berneiser S."/>
            <person name="Hempel S."/>
            <person name="Feldpausch M."/>
            <person name="Lamberth S."/>
            <person name="Van den Daele H."/>
            <person name="De Keyser A."/>
            <person name="Buysshaert C."/>
            <person name="Gielen J."/>
            <person name="Villarroel R."/>
            <person name="De Clercq R."/>
            <person name="van Montagu M."/>
            <person name="Rogers J."/>
            <person name="Cronin A."/>
            <person name="Quail M.A."/>
            <person name="Bray-Allen S."/>
            <person name="Clark L."/>
            <person name="Doggett J."/>
            <person name="Hall S."/>
            <person name="Kay M."/>
            <person name="Lennard N."/>
            <person name="McLay K."/>
            <person name="Mayes R."/>
            <person name="Pettett A."/>
            <person name="Rajandream M.A."/>
            <person name="Lyne M."/>
            <person name="Benes V."/>
            <person name="Rechmann S."/>
            <person name="Borkova D."/>
            <person name="Bloecker H."/>
            <person name="Scharfe M."/>
            <person name="Grimm M."/>
            <person name="Loehnert T.-H."/>
            <person name="Dose S."/>
            <person name="de Haan M."/>
            <person name="Maarse A.C."/>
            <person name="Schaefer M."/>
            <person name="Mueller-Auer S."/>
            <person name="Gabel C."/>
            <person name="Fuchs M."/>
            <person name="Fartmann B."/>
            <person name="Granderath K."/>
            <person name="Dauner D."/>
            <person name="Herzl A."/>
            <person name="Neumann S."/>
            <person name="Argiriou A."/>
            <person name="Vitale D."/>
            <person name="Liguori R."/>
            <person name="Piravandi E."/>
            <person name="Massenet O."/>
            <person name="Quigley F."/>
            <person name="Clabauld G."/>
            <person name="Muendlein A."/>
            <person name="Felber R."/>
            <person name="Schnabl S."/>
            <person name="Hiller R."/>
            <person name="Schmidt W."/>
            <person name="Lecharny A."/>
            <person name="Aubourg S."/>
            <person name="Chefdor F."/>
            <person name="Cooke R."/>
            <person name="Berger C."/>
            <person name="Monfort A."/>
            <person name="Casacuberta E."/>
            <person name="Gibbons T."/>
            <person name="Weber N."/>
            <person name="Vandenbol M."/>
            <person name="Bargues M."/>
            <person name="Terol J."/>
            <person name="Torres A."/>
            <person name="Perez-Perez A."/>
            <person name="Purnelle B."/>
            <person name="Bent E."/>
            <person name="Johnson S."/>
            <person name="Tacon D."/>
            <person name="Jesse T."/>
            <person name="Heijnen L."/>
            <person name="Schwarz S."/>
            <person name="Scholler P."/>
            <person name="Heber S."/>
            <person name="Francs P."/>
            <person name="Bielke C."/>
            <person name="Frishman D."/>
            <person name="Haase D."/>
            <person name="Lemcke K."/>
            <person name="Mewes H.-W."/>
            <person name="Stocker S."/>
            <person name="Zaccaria P."/>
            <person name="Bevan M."/>
            <person name="Wilson R.K."/>
            <person name="de la Bastide M."/>
            <person name="Habermann K."/>
            <person name="Parnell L."/>
            <person name="Dedhia N."/>
            <person name="Gnoj L."/>
            <person name="Schutz K."/>
            <person name="Huang E."/>
            <person name="Spiegel L."/>
            <person name="Sekhon M."/>
            <person name="Murray J."/>
            <person name="Sheet P."/>
            <person name="Cordes M."/>
            <person name="Abu-Threideh J."/>
            <person name="Stoneking T."/>
            <person name="Kalicki J."/>
            <person name="Graves T."/>
            <person name="Harmon G."/>
            <person name="Edwards J."/>
            <person name="Latreille P."/>
            <person name="Courtney L."/>
            <person name="Cloud J."/>
            <person name="Abbott A."/>
            <person name="Scott K."/>
            <person name="Johnson D."/>
            <person name="Minx P."/>
            <person name="Bentley D."/>
            <person name="Fulton B."/>
            <person name="Miller N."/>
            <person name="Greco T."/>
            <person name="Kemp K."/>
            <person name="Kramer J."/>
            <person name="Fulton L."/>
            <person name="Mardis E."/>
            <person name="Dante M."/>
            <person name="Pepin K."/>
            <person name="Hillier L.W."/>
            <person name="Nelson J."/>
            <person name="Spieth J."/>
            <person name="Ryan E."/>
            <person name="Andrews S."/>
            <person name="Geisel C."/>
            <person name="Layman D."/>
            <person name="Du H."/>
            <person name="Ali J."/>
            <person name="Berghoff A."/>
            <person name="Jones K."/>
            <person name="Drone K."/>
            <person name="Cotton M."/>
            <person name="Joshu C."/>
            <person name="Antonoiu B."/>
            <person name="Zidanic M."/>
            <person name="Strong C."/>
            <person name="Sun H."/>
            <person name="Lamar B."/>
            <person name="Yordan C."/>
            <person name="Ma P."/>
            <person name="Zhong J."/>
            <person name="Preston R."/>
            <person name="Vil D."/>
            <person name="Shekher M."/>
            <person name="Matero A."/>
            <person name="Shah R."/>
            <person name="Swaby I.K."/>
            <person name="O'Shaughnessy A."/>
            <person name="Rodriguez M."/>
            <person name="Hoffman J."/>
            <person name="Till S."/>
            <person name="Granat S."/>
            <person name="Shohdy N."/>
            <person name="Hasegawa A."/>
            <person name="Hameed A."/>
            <person name="Lodhi M."/>
            <person name="Johnson A."/>
            <person name="Chen E."/>
            <person name="Marra M.A."/>
            <person name="Martienssen R."/>
            <person name="McCombie W.R."/>
        </authorList>
    </citation>
    <scope>NUCLEOTIDE SEQUENCE [LARGE SCALE GENOMIC DNA]</scope>
    <source>
        <strain>cv. Columbia</strain>
    </source>
</reference>
<reference key="2">
    <citation type="journal article" date="2017" name="Plant J.">
        <title>Araport11: a complete reannotation of the Arabidopsis thaliana reference genome.</title>
        <authorList>
            <person name="Cheng C.Y."/>
            <person name="Krishnakumar V."/>
            <person name="Chan A.P."/>
            <person name="Thibaud-Nissen F."/>
            <person name="Schobel S."/>
            <person name="Town C.D."/>
        </authorList>
    </citation>
    <scope>GENOME REANNOTATION</scope>
    <source>
        <strain>cv. Columbia</strain>
    </source>
</reference>
<reference key="3">
    <citation type="journal article" date="2006" name="Plant Biotechnol. J.">
        <title>Simultaneous high-throughput recombinational cloning of open reading frames in closed and open configurations.</title>
        <authorList>
            <person name="Underwood B.A."/>
            <person name="Vanderhaeghen R."/>
            <person name="Whitford R."/>
            <person name="Town C.D."/>
            <person name="Hilson P."/>
        </authorList>
    </citation>
    <scope>NUCLEOTIDE SEQUENCE [LARGE SCALE MRNA]</scope>
    <source>
        <strain>cv. Columbia</strain>
    </source>
</reference>
<reference key="4">
    <citation type="journal article" date="2007" name="Plant J.">
        <title>Small cysteine-rich peptides resembling antimicrobial peptides have been under-predicted in plants.</title>
        <authorList>
            <person name="Silverstein K.A.T."/>
            <person name="Moskal W.A. Jr."/>
            <person name="Wu H.C."/>
            <person name="Underwood B.A."/>
            <person name="Graham M.A."/>
            <person name="Town C.D."/>
            <person name="VandenBosch K.A."/>
        </authorList>
    </citation>
    <scope>NUCLEOTIDE SEQUENCE [LARGE SCALE MRNA]</scope>
    <source>
        <strain>cv. Columbia</strain>
    </source>
</reference>
<reference key="5">
    <citation type="journal article" date="2005" name="Plant Physiol.">
        <title>Genome organization of more than 300 defensin-like genes in Arabidopsis.</title>
        <authorList>
            <person name="Silverstein K.A.T."/>
            <person name="Graham M.A."/>
            <person name="Paape T.D."/>
            <person name="VandenBosch K.A."/>
        </authorList>
    </citation>
    <scope>GENE FAMILY</scope>
</reference>
<name>DF100_ARATH</name>
<feature type="signal peptide" evidence="2">
    <location>
        <begin position="1"/>
        <end position="29"/>
    </location>
</feature>
<feature type="chain" id="PRO_0000379663" description="Defensin-like protein 100">
    <location>
        <begin position="30"/>
        <end position="87"/>
    </location>
</feature>
<feature type="disulfide bond" evidence="1">
    <location>
        <begin position="31"/>
        <end position="79"/>
    </location>
</feature>
<feature type="disulfide bond" evidence="1">
    <location>
        <begin position="38"/>
        <end position="64"/>
    </location>
</feature>
<feature type="disulfide bond" evidence="1">
    <location>
        <begin position="44"/>
        <end position="76"/>
    </location>
</feature>
<feature type="disulfide bond" evidence="1">
    <location>
        <begin position="48"/>
        <end position="78"/>
    </location>
</feature>
<keyword id="KW-0929">Antimicrobial</keyword>
<keyword id="KW-1015">Disulfide bond</keyword>
<keyword id="KW-0295">Fungicide</keyword>
<keyword id="KW-0611">Plant defense</keyword>
<keyword id="KW-1185">Reference proteome</keyword>
<keyword id="KW-0964">Secreted</keyword>
<keyword id="KW-0732">Signal</keyword>
<sequence length="87" mass="9695">MRSLRLRTVVVATIVVCLSVLLSPTEVDGSCDFPLGACTPFRDCKESCIKFKTRAGQTFFDGKCRPRDRPSVWTACFCCYYDSIGAQ</sequence>
<proteinExistence type="inferred from homology"/>
<organism>
    <name type="scientific">Arabidopsis thaliana</name>
    <name type="common">Mouse-ear cress</name>
    <dbReference type="NCBI Taxonomy" id="3702"/>
    <lineage>
        <taxon>Eukaryota</taxon>
        <taxon>Viridiplantae</taxon>
        <taxon>Streptophyta</taxon>
        <taxon>Embryophyta</taxon>
        <taxon>Tracheophyta</taxon>
        <taxon>Spermatophyta</taxon>
        <taxon>Magnoliopsida</taxon>
        <taxon>eudicotyledons</taxon>
        <taxon>Gunneridae</taxon>
        <taxon>Pentapetalae</taxon>
        <taxon>rosids</taxon>
        <taxon>malvids</taxon>
        <taxon>Brassicales</taxon>
        <taxon>Brassicaceae</taxon>
        <taxon>Camelineae</taxon>
        <taxon>Arabidopsis</taxon>
    </lineage>
</organism>